<dbReference type="EC" id="2.1.2.10" evidence="1"/>
<dbReference type="EMBL" id="CP000777">
    <property type="protein sequence ID" value="ABZ95545.1"/>
    <property type="molecule type" value="Genomic_DNA"/>
</dbReference>
<dbReference type="RefSeq" id="WP_012390109.1">
    <property type="nucleotide sequence ID" value="NC_010842.1"/>
</dbReference>
<dbReference type="SMR" id="B0SGN8"/>
<dbReference type="KEGG" id="lbf:LBF_3076"/>
<dbReference type="HOGENOM" id="CLU_007884_10_2_12"/>
<dbReference type="GO" id="GO:0005829">
    <property type="term" value="C:cytosol"/>
    <property type="evidence" value="ECO:0007669"/>
    <property type="project" value="TreeGrafter"/>
</dbReference>
<dbReference type="GO" id="GO:0005960">
    <property type="term" value="C:glycine cleavage complex"/>
    <property type="evidence" value="ECO:0007669"/>
    <property type="project" value="InterPro"/>
</dbReference>
<dbReference type="GO" id="GO:0004047">
    <property type="term" value="F:aminomethyltransferase activity"/>
    <property type="evidence" value="ECO:0007669"/>
    <property type="project" value="UniProtKB-UniRule"/>
</dbReference>
<dbReference type="GO" id="GO:0008483">
    <property type="term" value="F:transaminase activity"/>
    <property type="evidence" value="ECO:0007669"/>
    <property type="project" value="UniProtKB-KW"/>
</dbReference>
<dbReference type="GO" id="GO:0019464">
    <property type="term" value="P:glycine decarboxylation via glycine cleavage system"/>
    <property type="evidence" value="ECO:0007669"/>
    <property type="project" value="UniProtKB-UniRule"/>
</dbReference>
<dbReference type="Gene3D" id="2.40.30.110">
    <property type="entry name" value="Aminomethyltransferase beta-barrel domains"/>
    <property type="match status" value="1"/>
</dbReference>
<dbReference type="Gene3D" id="3.30.70.1400">
    <property type="entry name" value="Aminomethyltransferase beta-barrel domains"/>
    <property type="match status" value="1"/>
</dbReference>
<dbReference type="Gene3D" id="4.10.1250.10">
    <property type="entry name" value="Aminomethyltransferase fragment"/>
    <property type="match status" value="1"/>
</dbReference>
<dbReference type="Gene3D" id="3.30.1360.120">
    <property type="entry name" value="Probable tRNA modification gtpase trme, domain 1"/>
    <property type="match status" value="1"/>
</dbReference>
<dbReference type="HAMAP" id="MF_00259">
    <property type="entry name" value="GcvT"/>
    <property type="match status" value="1"/>
</dbReference>
<dbReference type="InterPro" id="IPR006223">
    <property type="entry name" value="GCS_T"/>
</dbReference>
<dbReference type="InterPro" id="IPR022903">
    <property type="entry name" value="GCS_T_bac"/>
</dbReference>
<dbReference type="InterPro" id="IPR013977">
    <property type="entry name" value="GCST_C"/>
</dbReference>
<dbReference type="InterPro" id="IPR006222">
    <property type="entry name" value="GCV_T_N"/>
</dbReference>
<dbReference type="InterPro" id="IPR028896">
    <property type="entry name" value="GcvT/YgfZ/DmdA"/>
</dbReference>
<dbReference type="InterPro" id="IPR029043">
    <property type="entry name" value="GcvT/YgfZ_C"/>
</dbReference>
<dbReference type="InterPro" id="IPR027266">
    <property type="entry name" value="TrmE/GcvT_dom1"/>
</dbReference>
<dbReference type="NCBIfam" id="TIGR00528">
    <property type="entry name" value="gcvT"/>
    <property type="match status" value="1"/>
</dbReference>
<dbReference type="NCBIfam" id="NF001567">
    <property type="entry name" value="PRK00389.1"/>
    <property type="match status" value="1"/>
</dbReference>
<dbReference type="PANTHER" id="PTHR43757">
    <property type="entry name" value="AMINOMETHYLTRANSFERASE"/>
    <property type="match status" value="1"/>
</dbReference>
<dbReference type="PANTHER" id="PTHR43757:SF2">
    <property type="entry name" value="AMINOMETHYLTRANSFERASE, MITOCHONDRIAL"/>
    <property type="match status" value="1"/>
</dbReference>
<dbReference type="Pfam" id="PF01571">
    <property type="entry name" value="GCV_T"/>
    <property type="match status" value="1"/>
</dbReference>
<dbReference type="Pfam" id="PF08669">
    <property type="entry name" value="GCV_T_C"/>
    <property type="match status" value="1"/>
</dbReference>
<dbReference type="PIRSF" id="PIRSF006487">
    <property type="entry name" value="GcvT"/>
    <property type="match status" value="1"/>
</dbReference>
<dbReference type="SUPFAM" id="SSF101790">
    <property type="entry name" value="Aminomethyltransferase beta-barrel domain"/>
    <property type="match status" value="1"/>
</dbReference>
<dbReference type="SUPFAM" id="SSF103025">
    <property type="entry name" value="Folate-binding domain"/>
    <property type="match status" value="1"/>
</dbReference>
<reference key="1">
    <citation type="journal article" date="2008" name="PLoS ONE">
        <title>Genome sequence of the saprophyte Leptospira biflexa provides insights into the evolution of Leptospira and the pathogenesis of leptospirosis.</title>
        <authorList>
            <person name="Picardeau M."/>
            <person name="Bulach D.M."/>
            <person name="Bouchier C."/>
            <person name="Zuerner R.L."/>
            <person name="Zidane N."/>
            <person name="Wilson P.J."/>
            <person name="Creno S."/>
            <person name="Kuczek E.S."/>
            <person name="Bommezzadri S."/>
            <person name="Davis J.C."/>
            <person name="McGrath A."/>
            <person name="Johnson M.J."/>
            <person name="Boursaux-Eude C."/>
            <person name="Seemann T."/>
            <person name="Rouy Z."/>
            <person name="Coppel R.L."/>
            <person name="Rood J.I."/>
            <person name="Lajus A."/>
            <person name="Davies J.K."/>
            <person name="Medigue C."/>
            <person name="Adler B."/>
        </authorList>
    </citation>
    <scope>NUCLEOTIDE SEQUENCE [LARGE SCALE GENOMIC DNA]</scope>
    <source>
        <strain>Patoc 1 / Ames</strain>
    </source>
</reference>
<keyword id="KW-0032">Aminotransferase</keyword>
<keyword id="KW-0808">Transferase</keyword>
<comment type="function">
    <text evidence="1">The glycine cleavage system catalyzes the degradation of glycine.</text>
</comment>
<comment type="catalytic activity">
    <reaction evidence="1">
        <text>N(6)-[(R)-S(8)-aminomethyldihydrolipoyl]-L-lysyl-[protein] + (6S)-5,6,7,8-tetrahydrofolate = N(6)-[(R)-dihydrolipoyl]-L-lysyl-[protein] + (6R)-5,10-methylene-5,6,7,8-tetrahydrofolate + NH4(+)</text>
        <dbReference type="Rhea" id="RHEA:16945"/>
        <dbReference type="Rhea" id="RHEA-COMP:10475"/>
        <dbReference type="Rhea" id="RHEA-COMP:10492"/>
        <dbReference type="ChEBI" id="CHEBI:15636"/>
        <dbReference type="ChEBI" id="CHEBI:28938"/>
        <dbReference type="ChEBI" id="CHEBI:57453"/>
        <dbReference type="ChEBI" id="CHEBI:83100"/>
        <dbReference type="ChEBI" id="CHEBI:83143"/>
        <dbReference type="EC" id="2.1.2.10"/>
    </reaction>
</comment>
<comment type="subunit">
    <text evidence="1">The glycine cleavage system is composed of four proteins: P, T, L and H.</text>
</comment>
<comment type="similarity">
    <text evidence="1">Belongs to the GcvT family.</text>
</comment>
<name>GCST_LEPBA</name>
<protein>
    <recommendedName>
        <fullName evidence="1">Aminomethyltransferase</fullName>
        <ecNumber evidence="1">2.1.2.10</ecNumber>
    </recommendedName>
    <alternativeName>
        <fullName evidence="1">Glycine cleavage system T protein</fullName>
    </alternativeName>
</protein>
<proteinExistence type="inferred from homology"/>
<organism>
    <name type="scientific">Leptospira biflexa serovar Patoc (strain Patoc 1 / Ames)</name>
    <dbReference type="NCBI Taxonomy" id="355278"/>
    <lineage>
        <taxon>Bacteria</taxon>
        <taxon>Pseudomonadati</taxon>
        <taxon>Spirochaetota</taxon>
        <taxon>Spirochaetia</taxon>
        <taxon>Leptospirales</taxon>
        <taxon>Leptospiraceae</taxon>
        <taxon>Leptospira</taxon>
    </lineage>
</organism>
<sequence>MELKQTPLHSIHKEMGAKMVPFGGWDMPVQYTGIIQEHLATRANAGIFDVSHMGEIFVTGDANDVLDFLESVTCNTISTMKEGQVQYNAVVNEVGGLVDDITVYKFNDTKYMICSNASNFEAVTQHLLKYVKGNVSIANDSKNWHQIALQGPKADAIFTKYLGKDLSSILYYHFEEMNWRGETIIVSRTGYTGEDGFEIYTSNALGVTLWKELLEIGKDFGLVPVGLGARDTLRLEAKYPLYGHELNAEWTPVESGINFIVKEKSKPYLGYDRIIADKKNGPKSKVVGVRLLEPGVLRENFPIFAADGKEIGKTTSGTHSPSRKESLGLAILQTEFAKNQTEVFVEIRGQKKLAKVETGAFVQGSVRNNR</sequence>
<gene>
    <name evidence="1" type="primary">gcvT</name>
    <name type="ordered locus">LBF_3076</name>
</gene>
<feature type="chain" id="PRO_1000204638" description="Aminomethyltransferase">
    <location>
        <begin position="1"/>
        <end position="370"/>
    </location>
</feature>
<evidence type="ECO:0000255" key="1">
    <source>
        <dbReference type="HAMAP-Rule" id="MF_00259"/>
    </source>
</evidence>
<accession>B0SGN8</accession>